<proteinExistence type="inferred from homology"/>
<feature type="chain" id="PRO_0000267928" description="Large ribosomal subunit protein bL17">
    <location>
        <begin position="1"/>
        <end position="210"/>
    </location>
</feature>
<feature type="region of interest" description="Disordered" evidence="2">
    <location>
        <begin position="177"/>
        <end position="210"/>
    </location>
</feature>
<reference key="1">
    <citation type="journal article" date="2003" name="Proc. Natl. Acad. Sci. U.S.A.">
        <title>Complete genome sequence of the marine planctomycete Pirellula sp. strain 1.</title>
        <authorList>
            <person name="Gloeckner F.O."/>
            <person name="Kube M."/>
            <person name="Bauer M."/>
            <person name="Teeling H."/>
            <person name="Lombardot T."/>
            <person name="Ludwig W."/>
            <person name="Gade D."/>
            <person name="Beck A."/>
            <person name="Borzym K."/>
            <person name="Heitmann K."/>
            <person name="Rabus R."/>
            <person name="Schlesner H."/>
            <person name="Amann R."/>
            <person name="Reinhardt R."/>
        </authorList>
    </citation>
    <scope>NUCLEOTIDE SEQUENCE [LARGE SCALE GENOMIC DNA]</scope>
    <source>
        <strain>DSM 10527 / NCIMB 13988 / SH1</strain>
    </source>
</reference>
<accession>Q7UIC4</accession>
<organism>
    <name type="scientific">Rhodopirellula baltica (strain DSM 10527 / NCIMB 13988 / SH1)</name>
    <dbReference type="NCBI Taxonomy" id="243090"/>
    <lineage>
        <taxon>Bacteria</taxon>
        <taxon>Pseudomonadati</taxon>
        <taxon>Planctomycetota</taxon>
        <taxon>Planctomycetia</taxon>
        <taxon>Pirellulales</taxon>
        <taxon>Pirellulaceae</taxon>
        <taxon>Rhodopirellula</taxon>
    </lineage>
</organism>
<sequence>MRHRRKGRVLGRSPAHRKALMRNLSSALFLTERDASLDENAPKVPGRIITTLEKAKEVRPLVEKCITLAKRALPALEEAKKYETSAERGSDEYKKWRKSEQWTQWADARAPYVNAQRRVLQLIGDREAVAVLFDTIAERFTDRPGGYTRIMRLAKPRLGDGGTRAILELVGKNDRVTRSAQRPAFEQDAPESDSAPEAEAKTEEETASAN</sequence>
<comment type="subunit">
    <text evidence="1">Part of the 50S ribosomal subunit. Contacts protein L32.</text>
</comment>
<comment type="similarity">
    <text evidence="1">Belongs to the bacterial ribosomal protein bL17 family.</text>
</comment>
<keyword id="KW-1185">Reference proteome</keyword>
<keyword id="KW-0687">Ribonucleoprotein</keyword>
<keyword id="KW-0689">Ribosomal protein</keyword>
<evidence type="ECO:0000255" key="1">
    <source>
        <dbReference type="HAMAP-Rule" id="MF_01368"/>
    </source>
</evidence>
<evidence type="ECO:0000256" key="2">
    <source>
        <dbReference type="SAM" id="MobiDB-lite"/>
    </source>
</evidence>
<evidence type="ECO:0000305" key="3"/>
<name>RL17_RHOBA</name>
<gene>
    <name evidence="1" type="primary">rplQ</name>
    <name type="ordered locus">RB12628</name>
</gene>
<protein>
    <recommendedName>
        <fullName evidence="1">Large ribosomal subunit protein bL17</fullName>
    </recommendedName>
    <alternativeName>
        <fullName evidence="3">50S ribosomal protein L17</fullName>
    </alternativeName>
</protein>
<dbReference type="EMBL" id="BX294155">
    <property type="protein sequence ID" value="CAD77690.1"/>
    <property type="molecule type" value="Genomic_DNA"/>
</dbReference>
<dbReference type="RefSeq" id="NP_870613.1">
    <property type="nucleotide sequence ID" value="NC_005027.1"/>
</dbReference>
<dbReference type="RefSeq" id="WP_011123829.1">
    <property type="nucleotide sequence ID" value="NC_005027.1"/>
</dbReference>
<dbReference type="SMR" id="Q7UIC4"/>
<dbReference type="FunCoup" id="Q7UIC4">
    <property type="interactions" value="608"/>
</dbReference>
<dbReference type="STRING" id="243090.RB12628"/>
<dbReference type="EnsemblBacteria" id="CAD77690">
    <property type="protein sequence ID" value="CAD77690"/>
    <property type="gene ID" value="RB12628"/>
</dbReference>
<dbReference type="KEGG" id="rba:RB12628"/>
<dbReference type="PATRIC" id="fig|243090.15.peg.6124"/>
<dbReference type="eggNOG" id="COG0203">
    <property type="taxonomic scope" value="Bacteria"/>
</dbReference>
<dbReference type="HOGENOM" id="CLU_074407_2_2_0"/>
<dbReference type="InParanoid" id="Q7UIC4"/>
<dbReference type="OrthoDB" id="9809073at2"/>
<dbReference type="Proteomes" id="UP000001025">
    <property type="component" value="Chromosome"/>
</dbReference>
<dbReference type="GO" id="GO:0022625">
    <property type="term" value="C:cytosolic large ribosomal subunit"/>
    <property type="evidence" value="ECO:0000318"/>
    <property type="project" value="GO_Central"/>
</dbReference>
<dbReference type="GO" id="GO:0003735">
    <property type="term" value="F:structural constituent of ribosome"/>
    <property type="evidence" value="ECO:0000318"/>
    <property type="project" value="GO_Central"/>
</dbReference>
<dbReference type="GO" id="GO:0006412">
    <property type="term" value="P:translation"/>
    <property type="evidence" value="ECO:0007669"/>
    <property type="project" value="UniProtKB-UniRule"/>
</dbReference>
<dbReference type="Gene3D" id="3.90.1030.10">
    <property type="entry name" value="Ribosomal protein L17"/>
    <property type="match status" value="1"/>
</dbReference>
<dbReference type="HAMAP" id="MF_01368">
    <property type="entry name" value="Ribosomal_bL17"/>
    <property type="match status" value="1"/>
</dbReference>
<dbReference type="InterPro" id="IPR000456">
    <property type="entry name" value="Ribosomal_bL17"/>
</dbReference>
<dbReference type="InterPro" id="IPR036373">
    <property type="entry name" value="Ribosomal_bL17_sf"/>
</dbReference>
<dbReference type="PANTHER" id="PTHR14413:SF16">
    <property type="entry name" value="LARGE RIBOSOMAL SUBUNIT PROTEIN BL17M"/>
    <property type="match status" value="1"/>
</dbReference>
<dbReference type="PANTHER" id="PTHR14413">
    <property type="entry name" value="RIBOSOMAL PROTEIN L17"/>
    <property type="match status" value="1"/>
</dbReference>
<dbReference type="Pfam" id="PF01196">
    <property type="entry name" value="Ribosomal_L17"/>
    <property type="match status" value="1"/>
</dbReference>
<dbReference type="SUPFAM" id="SSF64263">
    <property type="entry name" value="Prokaryotic ribosomal protein L17"/>
    <property type="match status" value="1"/>
</dbReference>